<keyword id="KW-0963">Cytoplasm</keyword>
<keyword id="KW-0238">DNA-binding</keyword>
<keyword id="KW-0597">Phosphoprotein</keyword>
<keyword id="KW-0678">Repressor</keyword>
<keyword id="KW-0804">Transcription</keyword>
<keyword id="KW-0805">Transcription regulation</keyword>
<evidence type="ECO:0000255" key="1">
    <source>
        <dbReference type="HAMAP-Rule" id="MF_00621"/>
    </source>
</evidence>
<gene>
    <name evidence="1" type="primary">codY</name>
    <name type="ordered locus">BALH_3459</name>
</gene>
<accession>A0RHK1</accession>
<organism>
    <name type="scientific">Bacillus thuringiensis (strain Al Hakam)</name>
    <dbReference type="NCBI Taxonomy" id="412694"/>
    <lineage>
        <taxon>Bacteria</taxon>
        <taxon>Bacillati</taxon>
        <taxon>Bacillota</taxon>
        <taxon>Bacilli</taxon>
        <taxon>Bacillales</taxon>
        <taxon>Bacillaceae</taxon>
        <taxon>Bacillus</taxon>
        <taxon>Bacillus cereus group</taxon>
    </lineage>
</organism>
<proteinExistence type="inferred from homology"/>
<name>CODY_BACAH</name>
<protein>
    <recommendedName>
        <fullName evidence="1">Global transcriptional regulator CodY</fullName>
    </recommendedName>
</protein>
<dbReference type="EMBL" id="CP000485">
    <property type="protein sequence ID" value="ABK86694.1"/>
    <property type="molecule type" value="Genomic_DNA"/>
</dbReference>
<dbReference type="RefSeq" id="WP_000421288.1">
    <property type="nucleotide sequence ID" value="NC_008600.1"/>
</dbReference>
<dbReference type="SMR" id="A0RHK1"/>
<dbReference type="GeneID" id="83637535"/>
<dbReference type="KEGG" id="btl:BALH_3459"/>
<dbReference type="HOGENOM" id="CLU_089581_0_0_9"/>
<dbReference type="GO" id="GO:0005737">
    <property type="term" value="C:cytoplasm"/>
    <property type="evidence" value="ECO:0007669"/>
    <property type="project" value="UniProtKB-SubCell"/>
</dbReference>
<dbReference type="GO" id="GO:0003677">
    <property type="term" value="F:DNA binding"/>
    <property type="evidence" value="ECO:0007669"/>
    <property type="project" value="UniProtKB-UniRule"/>
</dbReference>
<dbReference type="GO" id="GO:0003700">
    <property type="term" value="F:DNA-binding transcription factor activity"/>
    <property type="evidence" value="ECO:0007669"/>
    <property type="project" value="InterPro"/>
</dbReference>
<dbReference type="GO" id="GO:0005525">
    <property type="term" value="F:GTP binding"/>
    <property type="evidence" value="ECO:0007669"/>
    <property type="project" value="InterPro"/>
</dbReference>
<dbReference type="GO" id="GO:0045892">
    <property type="term" value="P:negative regulation of DNA-templated transcription"/>
    <property type="evidence" value="ECO:0007669"/>
    <property type="project" value="UniProtKB-UniRule"/>
</dbReference>
<dbReference type="FunFam" id="1.10.10.10:FF:000034">
    <property type="entry name" value="GTP-sensing transcriptional pleiotropic repressor CodY"/>
    <property type="match status" value="1"/>
</dbReference>
<dbReference type="FunFam" id="3.30.450.40:FF:000003">
    <property type="entry name" value="GTP-sensing transcriptional pleiotropic repressor CodY"/>
    <property type="match status" value="1"/>
</dbReference>
<dbReference type="Gene3D" id="3.30.450.40">
    <property type="match status" value="1"/>
</dbReference>
<dbReference type="Gene3D" id="1.10.10.10">
    <property type="entry name" value="Winged helix-like DNA-binding domain superfamily/Winged helix DNA-binding domain"/>
    <property type="match status" value="1"/>
</dbReference>
<dbReference type="HAMAP" id="MF_00621">
    <property type="entry name" value="HTH_type_CodY"/>
    <property type="match status" value="1"/>
</dbReference>
<dbReference type="InterPro" id="IPR014154">
    <property type="entry name" value="CodY"/>
</dbReference>
<dbReference type="InterPro" id="IPR029016">
    <property type="entry name" value="GAF-like_dom_sf"/>
</dbReference>
<dbReference type="InterPro" id="IPR013198">
    <property type="entry name" value="GTP_trans_reg_CodY_C"/>
</dbReference>
<dbReference type="InterPro" id="IPR010312">
    <property type="entry name" value="Transc_reg_CodY_N"/>
</dbReference>
<dbReference type="InterPro" id="IPR036388">
    <property type="entry name" value="WH-like_DNA-bd_sf"/>
</dbReference>
<dbReference type="InterPro" id="IPR036390">
    <property type="entry name" value="WH_DNA-bd_sf"/>
</dbReference>
<dbReference type="NCBIfam" id="TIGR02787">
    <property type="entry name" value="codY_Gpos"/>
    <property type="match status" value="1"/>
</dbReference>
<dbReference type="NCBIfam" id="NF003170">
    <property type="entry name" value="PRK04158.1"/>
    <property type="match status" value="1"/>
</dbReference>
<dbReference type="PANTHER" id="PTHR40062:SF1">
    <property type="entry name" value="GLOBAL TRANSCRIPTIONAL REGULATOR CODY"/>
    <property type="match status" value="1"/>
</dbReference>
<dbReference type="PANTHER" id="PTHR40062">
    <property type="entry name" value="GTP-SENSING TRANSCRIPTIONAL PLEIOTROPIC REPRESSOR CODY"/>
    <property type="match status" value="1"/>
</dbReference>
<dbReference type="Pfam" id="PF06018">
    <property type="entry name" value="CodY"/>
    <property type="match status" value="1"/>
</dbReference>
<dbReference type="Pfam" id="PF08222">
    <property type="entry name" value="HTH_CodY"/>
    <property type="match status" value="1"/>
</dbReference>
<dbReference type="PIRSF" id="PIRSF011572">
    <property type="entry name" value="GTP_sensing_CodY"/>
    <property type="match status" value="1"/>
</dbReference>
<dbReference type="SUPFAM" id="SSF46785">
    <property type="entry name" value="Winged helix' DNA-binding domain"/>
    <property type="match status" value="1"/>
</dbReference>
<feature type="chain" id="PRO_1000051531" description="Global transcriptional regulator CodY">
    <location>
        <begin position="1"/>
        <end position="259"/>
    </location>
</feature>
<feature type="DNA-binding region" description="H-T-H motif" evidence="1">
    <location>
        <begin position="203"/>
        <end position="222"/>
    </location>
</feature>
<feature type="region of interest" description="GAF domain" evidence="1">
    <location>
        <begin position="1"/>
        <end position="155"/>
    </location>
</feature>
<feature type="modified residue" description="Phosphoserine" evidence="1">
    <location>
        <position position="215"/>
    </location>
</feature>
<sequence length="259" mass="28774">MELLAKTRKLNALLQSAAGKPVNFREMSDTMCEVIEANVFVVSRRGKLLGYAIHQQIENERMKQMLAERQFPEEYTQSLFNITETSSNLDVNSAYTAFPVENKELFGQGLTTIVPIVGGGERLGTLVLARLGQEFLDDDLILAEYSSTVVGMEILREKAEEIEEEARSKAVVQMAISSLSYSELEAIEHIFEELNGTEGLLVASKIADRVGITRSVIVNALRKLESAGVIESRSLGMKGTYIKVLNDKFLHELAKLKTN</sequence>
<reference key="1">
    <citation type="journal article" date="2007" name="J. Bacteriol.">
        <title>The complete genome sequence of Bacillus thuringiensis Al Hakam.</title>
        <authorList>
            <person name="Challacombe J.F."/>
            <person name="Altherr M.R."/>
            <person name="Xie G."/>
            <person name="Bhotika S.S."/>
            <person name="Brown N."/>
            <person name="Bruce D."/>
            <person name="Campbell C.S."/>
            <person name="Campbell M.L."/>
            <person name="Chen J."/>
            <person name="Chertkov O."/>
            <person name="Cleland C."/>
            <person name="Dimitrijevic M."/>
            <person name="Doggett N.A."/>
            <person name="Fawcett J.J."/>
            <person name="Glavina T."/>
            <person name="Goodwin L.A."/>
            <person name="Green L.D."/>
            <person name="Han C.S."/>
            <person name="Hill K.K."/>
            <person name="Hitchcock P."/>
            <person name="Jackson P.J."/>
            <person name="Keim P."/>
            <person name="Kewalramani A.R."/>
            <person name="Longmire J."/>
            <person name="Lucas S."/>
            <person name="Malfatti S."/>
            <person name="Martinez D."/>
            <person name="McMurry K."/>
            <person name="Meincke L.J."/>
            <person name="Misra M."/>
            <person name="Moseman B.L."/>
            <person name="Mundt M."/>
            <person name="Munk A.C."/>
            <person name="Okinaka R.T."/>
            <person name="Parson-Quintana B."/>
            <person name="Reilly L.P."/>
            <person name="Richardson P."/>
            <person name="Robinson D.L."/>
            <person name="Saunders E."/>
            <person name="Tapia R."/>
            <person name="Tesmer J.G."/>
            <person name="Thayer N."/>
            <person name="Thompson L.S."/>
            <person name="Tice H."/>
            <person name="Ticknor L.O."/>
            <person name="Wills P.L."/>
            <person name="Gilna P."/>
            <person name="Brettin T.S."/>
        </authorList>
    </citation>
    <scope>NUCLEOTIDE SEQUENCE [LARGE SCALE GENOMIC DNA]</scope>
    <source>
        <strain>Al Hakam</strain>
    </source>
</reference>
<comment type="function">
    <text evidence="1">DNA-binding global transcriptional regulator which is involved in the adaptive response to starvation and acts by directly or indirectly controlling the expression of numerous genes in response to nutrient availability. During rapid exponential growth, CodY is highly active and represses genes whose products allow adaptation to nutrient depletion.</text>
</comment>
<comment type="subcellular location">
    <subcellularLocation>
        <location evidence="1">Cytoplasm</location>
    </subcellularLocation>
</comment>
<comment type="similarity">
    <text evidence="1">Belongs to the CodY family.</text>
</comment>